<organism>
    <name type="scientific">Jannaschia sp. (strain CCS1)</name>
    <dbReference type="NCBI Taxonomy" id="290400"/>
    <lineage>
        <taxon>Bacteria</taxon>
        <taxon>Pseudomonadati</taxon>
        <taxon>Pseudomonadota</taxon>
        <taxon>Alphaproteobacteria</taxon>
        <taxon>Rhodobacterales</taxon>
        <taxon>Roseobacteraceae</taxon>
        <taxon>Jannaschia</taxon>
    </lineage>
</organism>
<comment type="function">
    <text evidence="1">Endonuclease that specifically degrades the RNA of RNA-DNA hybrids.</text>
</comment>
<comment type="catalytic activity">
    <reaction evidence="1">
        <text>Endonucleolytic cleavage to 5'-phosphomonoester.</text>
        <dbReference type="EC" id="3.1.26.4"/>
    </reaction>
</comment>
<comment type="cofactor">
    <cofactor evidence="1">
        <name>Mn(2+)</name>
        <dbReference type="ChEBI" id="CHEBI:29035"/>
    </cofactor>
    <cofactor evidence="1">
        <name>Mg(2+)</name>
        <dbReference type="ChEBI" id="CHEBI:18420"/>
    </cofactor>
    <text evidence="1">Manganese or magnesium. Binds 1 divalent metal ion per monomer in the absence of substrate. May bind a second metal ion after substrate binding.</text>
</comment>
<comment type="subcellular location">
    <subcellularLocation>
        <location evidence="1">Cytoplasm</location>
    </subcellularLocation>
</comment>
<comment type="similarity">
    <text evidence="1">Belongs to the RNase HII family.</text>
</comment>
<proteinExistence type="inferred from homology"/>
<sequence>MGPDFEIERELGGLVAGVDEVGRGPWAGPVTACAVVLDPMQVPDGLNDSKKLSEARRDALAMQILRVADVSLGWASVEEIDALNIRQATFLAMRRAMDGLTTPPTHALIDGNAIPPGLSCPATCVVKGDGRSVSIAAASIVAKVRRDALMKELAVMHPGYGWETNMGYGTAKHAAGLHHLGVTQYHRRSFAPIAKILCG</sequence>
<name>RNH2_JANSC</name>
<reference key="1">
    <citation type="submission" date="2006-02" db="EMBL/GenBank/DDBJ databases">
        <title>Complete sequence of chromosome of Jannaschia sp. CCS1.</title>
        <authorList>
            <consortium name="US DOE Joint Genome Institute"/>
            <person name="Copeland A."/>
            <person name="Lucas S."/>
            <person name="Lapidus A."/>
            <person name="Barry K."/>
            <person name="Detter J.C."/>
            <person name="Glavina del Rio T."/>
            <person name="Hammon N."/>
            <person name="Israni S."/>
            <person name="Pitluck S."/>
            <person name="Brettin T."/>
            <person name="Bruce D."/>
            <person name="Han C."/>
            <person name="Tapia R."/>
            <person name="Gilna P."/>
            <person name="Chertkov O."/>
            <person name="Saunders E."/>
            <person name="Schmutz J."/>
            <person name="Larimer F."/>
            <person name="Land M."/>
            <person name="Kyrpides N."/>
            <person name="Lykidis A."/>
            <person name="Moran M.A."/>
            <person name="Belas R."/>
            <person name="Ye W."/>
            <person name="Buchan A."/>
            <person name="Gonzalez J.M."/>
            <person name="Schell M.A."/>
            <person name="Richardson P."/>
        </authorList>
    </citation>
    <scope>NUCLEOTIDE SEQUENCE [LARGE SCALE GENOMIC DNA]</scope>
    <source>
        <strain>CCS1</strain>
    </source>
</reference>
<evidence type="ECO:0000255" key="1">
    <source>
        <dbReference type="HAMAP-Rule" id="MF_00052"/>
    </source>
</evidence>
<evidence type="ECO:0000255" key="2">
    <source>
        <dbReference type="PROSITE-ProRule" id="PRU01319"/>
    </source>
</evidence>
<feature type="chain" id="PRO_0000334908" description="Ribonuclease HII">
    <location>
        <begin position="1"/>
        <end position="199"/>
    </location>
</feature>
<feature type="domain" description="RNase H type-2" evidence="2">
    <location>
        <begin position="13"/>
        <end position="199"/>
    </location>
</feature>
<feature type="binding site" evidence="1">
    <location>
        <position position="19"/>
    </location>
    <ligand>
        <name>a divalent metal cation</name>
        <dbReference type="ChEBI" id="CHEBI:60240"/>
    </ligand>
</feature>
<feature type="binding site" evidence="1">
    <location>
        <position position="20"/>
    </location>
    <ligand>
        <name>a divalent metal cation</name>
        <dbReference type="ChEBI" id="CHEBI:60240"/>
    </ligand>
</feature>
<feature type="binding site" evidence="1">
    <location>
        <position position="110"/>
    </location>
    <ligand>
        <name>a divalent metal cation</name>
        <dbReference type="ChEBI" id="CHEBI:60240"/>
    </ligand>
</feature>
<gene>
    <name evidence="1" type="primary">rnhB</name>
    <name type="ordered locus">Jann_0391</name>
</gene>
<dbReference type="EC" id="3.1.26.4" evidence="1"/>
<dbReference type="EMBL" id="CP000264">
    <property type="protein sequence ID" value="ABD53308.1"/>
    <property type="molecule type" value="Genomic_DNA"/>
</dbReference>
<dbReference type="RefSeq" id="WP_011453517.1">
    <property type="nucleotide sequence ID" value="NC_007802.1"/>
</dbReference>
<dbReference type="SMR" id="Q28VF4"/>
<dbReference type="STRING" id="290400.Jann_0391"/>
<dbReference type="KEGG" id="jan:Jann_0391"/>
<dbReference type="eggNOG" id="COG0164">
    <property type="taxonomic scope" value="Bacteria"/>
</dbReference>
<dbReference type="HOGENOM" id="CLU_036532_3_2_5"/>
<dbReference type="OrthoDB" id="9803420at2"/>
<dbReference type="Proteomes" id="UP000008326">
    <property type="component" value="Chromosome"/>
</dbReference>
<dbReference type="GO" id="GO:0005737">
    <property type="term" value="C:cytoplasm"/>
    <property type="evidence" value="ECO:0007669"/>
    <property type="project" value="UniProtKB-SubCell"/>
</dbReference>
<dbReference type="GO" id="GO:0032299">
    <property type="term" value="C:ribonuclease H2 complex"/>
    <property type="evidence" value="ECO:0007669"/>
    <property type="project" value="TreeGrafter"/>
</dbReference>
<dbReference type="GO" id="GO:0030145">
    <property type="term" value="F:manganese ion binding"/>
    <property type="evidence" value="ECO:0007669"/>
    <property type="project" value="UniProtKB-UniRule"/>
</dbReference>
<dbReference type="GO" id="GO:0003723">
    <property type="term" value="F:RNA binding"/>
    <property type="evidence" value="ECO:0007669"/>
    <property type="project" value="InterPro"/>
</dbReference>
<dbReference type="GO" id="GO:0004523">
    <property type="term" value="F:RNA-DNA hybrid ribonuclease activity"/>
    <property type="evidence" value="ECO:0007669"/>
    <property type="project" value="UniProtKB-UniRule"/>
</dbReference>
<dbReference type="GO" id="GO:0043137">
    <property type="term" value="P:DNA replication, removal of RNA primer"/>
    <property type="evidence" value="ECO:0007669"/>
    <property type="project" value="TreeGrafter"/>
</dbReference>
<dbReference type="GO" id="GO:0006298">
    <property type="term" value="P:mismatch repair"/>
    <property type="evidence" value="ECO:0007669"/>
    <property type="project" value="TreeGrafter"/>
</dbReference>
<dbReference type="CDD" id="cd07182">
    <property type="entry name" value="RNase_HII_bacteria_HII_like"/>
    <property type="match status" value="1"/>
</dbReference>
<dbReference type="Gene3D" id="3.30.420.10">
    <property type="entry name" value="Ribonuclease H-like superfamily/Ribonuclease H"/>
    <property type="match status" value="1"/>
</dbReference>
<dbReference type="HAMAP" id="MF_00052_B">
    <property type="entry name" value="RNase_HII_B"/>
    <property type="match status" value="1"/>
</dbReference>
<dbReference type="InterPro" id="IPR022898">
    <property type="entry name" value="RNase_HII"/>
</dbReference>
<dbReference type="InterPro" id="IPR001352">
    <property type="entry name" value="RNase_HII/HIII"/>
</dbReference>
<dbReference type="InterPro" id="IPR024567">
    <property type="entry name" value="RNase_HII/HIII_dom"/>
</dbReference>
<dbReference type="InterPro" id="IPR012337">
    <property type="entry name" value="RNaseH-like_sf"/>
</dbReference>
<dbReference type="InterPro" id="IPR036397">
    <property type="entry name" value="RNaseH_sf"/>
</dbReference>
<dbReference type="NCBIfam" id="NF000595">
    <property type="entry name" value="PRK00015.1-3"/>
    <property type="match status" value="1"/>
</dbReference>
<dbReference type="PANTHER" id="PTHR10954">
    <property type="entry name" value="RIBONUCLEASE H2 SUBUNIT A"/>
    <property type="match status" value="1"/>
</dbReference>
<dbReference type="PANTHER" id="PTHR10954:SF18">
    <property type="entry name" value="RIBONUCLEASE HII"/>
    <property type="match status" value="1"/>
</dbReference>
<dbReference type="Pfam" id="PF01351">
    <property type="entry name" value="RNase_HII"/>
    <property type="match status" value="1"/>
</dbReference>
<dbReference type="SUPFAM" id="SSF53098">
    <property type="entry name" value="Ribonuclease H-like"/>
    <property type="match status" value="1"/>
</dbReference>
<dbReference type="PROSITE" id="PS51975">
    <property type="entry name" value="RNASE_H_2"/>
    <property type="match status" value="1"/>
</dbReference>
<protein>
    <recommendedName>
        <fullName evidence="1">Ribonuclease HII</fullName>
        <shortName evidence="1">RNase HII</shortName>
        <ecNumber evidence="1">3.1.26.4</ecNumber>
    </recommendedName>
</protein>
<accession>Q28VF4</accession>
<keyword id="KW-0963">Cytoplasm</keyword>
<keyword id="KW-0255">Endonuclease</keyword>
<keyword id="KW-0378">Hydrolase</keyword>
<keyword id="KW-0464">Manganese</keyword>
<keyword id="KW-0479">Metal-binding</keyword>
<keyword id="KW-0540">Nuclease</keyword>
<keyword id="KW-1185">Reference proteome</keyword>